<keyword id="KW-0067">ATP-binding</keyword>
<keyword id="KW-0963">Cytoplasm</keyword>
<keyword id="KW-0238">DNA-binding</keyword>
<keyword id="KW-0413">Isomerase</keyword>
<keyword id="KW-0547">Nucleotide-binding</keyword>
<keyword id="KW-0799">Topoisomerase</keyword>
<protein>
    <recommendedName>
        <fullName>DNA gyrase subunit B</fullName>
        <ecNumber evidence="2">5.6.2.2</ecNumber>
    </recommendedName>
</protein>
<sequence length="388" mass="43111">DNSYKVSGGLHGVGVSVVNALSSKLHLTIYRAGQIHEQEYHHGDPQYPLRVIGETDNTGTTVRFWPSAETFSQTIFNVEILARRLRELSFLNAGVRIVLRDERINLEHVYDYEGGLSEFVKYINEGKNHLNEIFHFTADADNGIAVEVALQWNDSYQENVRCFTNNIPQKDGGTHLAGFRAALTRGLNQYLENENILKKEKVNVTGDDAREGLTAIISVKVPDPKFSSQTKEKLVSSEVKPAVEQAMNKEFSAYLLENPQAAKSIAGKIIDAARARDAARKAREMTRRKSALDIAGLPGKLADCQEKDPALSELYLVEGDSAGGSAKQGRNRKMQAILPLKGKILNVERARFDKMISSQEVGTLITALGCGIGREEYNPDKLRYHKII</sequence>
<evidence type="ECO:0000250" key="1">
    <source>
        <dbReference type="UniProtKB" id="P0AES6"/>
    </source>
</evidence>
<evidence type="ECO:0000255" key="2">
    <source>
        <dbReference type="PROSITE-ProRule" id="PRU00995"/>
    </source>
</evidence>
<evidence type="ECO:0000305" key="3"/>
<gene>
    <name type="primary">gyrB</name>
</gene>
<dbReference type="EC" id="5.6.2.2" evidence="2"/>
<dbReference type="EMBL" id="AB008684">
    <property type="protein sequence ID" value="BAA75401.1"/>
    <property type="molecule type" value="Genomic_DNA"/>
</dbReference>
<dbReference type="EMBL" id="AB008700">
    <property type="protein sequence ID" value="BAA75417.1"/>
    <property type="molecule type" value="Genomic_DNA"/>
</dbReference>
<dbReference type="EMBL" id="AB008699">
    <property type="protein sequence ID" value="BAA75416.1"/>
    <property type="molecule type" value="Genomic_DNA"/>
</dbReference>
<dbReference type="EMBL" id="D73428">
    <property type="protein sequence ID" value="BAA11153.1"/>
    <property type="molecule type" value="Genomic_DNA"/>
</dbReference>
<dbReference type="EMBL" id="D73413">
    <property type="protein sequence ID" value="BAA11138.1"/>
    <property type="molecule type" value="Genomic_DNA"/>
</dbReference>
<dbReference type="PIR" id="T43897">
    <property type="entry name" value="T43897"/>
</dbReference>
<dbReference type="SMR" id="Q43907"/>
<dbReference type="STRING" id="400667.A1S_0004"/>
<dbReference type="eggNOG" id="COG0187">
    <property type="taxonomic scope" value="Bacteria"/>
</dbReference>
<dbReference type="GO" id="GO:0005737">
    <property type="term" value="C:cytoplasm"/>
    <property type="evidence" value="ECO:0007669"/>
    <property type="project" value="UniProtKB-SubCell"/>
</dbReference>
<dbReference type="GO" id="GO:0005524">
    <property type="term" value="F:ATP binding"/>
    <property type="evidence" value="ECO:0007669"/>
    <property type="project" value="UniProtKB-KW"/>
</dbReference>
<dbReference type="GO" id="GO:0003677">
    <property type="term" value="F:DNA binding"/>
    <property type="evidence" value="ECO:0007669"/>
    <property type="project" value="UniProtKB-KW"/>
</dbReference>
<dbReference type="GO" id="GO:0003918">
    <property type="term" value="F:DNA topoisomerase type II (double strand cut, ATP-hydrolyzing) activity"/>
    <property type="evidence" value="ECO:0007669"/>
    <property type="project" value="UniProtKB-EC"/>
</dbReference>
<dbReference type="GO" id="GO:0006265">
    <property type="term" value="P:DNA topological change"/>
    <property type="evidence" value="ECO:0007669"/>
    <property type="project" value="InterPro"/>
</dbReference>
<dbReference type="CDD" id="cd00822">
    <property type="entry name" value="TopoII_Trans_DNA_gyrase"/>
    <property type="match status" value="1"/>
</dbReference>
<dbReference type="FunFam" id="3.30.230.10:FF:000005">
    <property type="entry name" value="DNA gyrase subunit B"/>
    <property type="match status" value="1"/>
</dbReference>
<dbReference type="Gene3D" id="3.30.230.10">
    <property type="match status" value="1"/>
</dbReference>
<dbReference type="Gene3D" id="3.40.50.670">
    <property type="match status" value="1"/>
</dbReference>
<dbReference type="Gene3D" id="3.30.565.10">
    <property type="entry name" value="Histidine kinase-like ATPase, C-terminal domain"/>
    <property type="match status" value="1"/>
</dbReference>
<dbReference type="InterPro" id="IPR036890">
    <property type="entry name" value="HATPase_C_sf"/>
</dbReference>
<dbReference type="InterPro" id="IPR020568">
    <property type="entry name" value="Ribosomal_Su5_D2-typ_SF"/>
</dbReference>
<dbReference type="InterPro" id="IPR014721">
    <property type="entry name" value="Ribsml_uS5_D2-typ_fold_subgr"/>
</dbReference>
<dbReference type="InterPro" id="IPR001241">
    <property type="entry name" value="Topo_IIA"/>
</dbReference>
<dbReference type="InterPro" id="IPR013760">
    <property type="entry name" value="Topo_IIA-like_dom_sf"/>
</dbReference>
<dbReference type="InterPro" id="IPR000565">
    <property type="entry name" value="Topo_IIA_B"/>
</dbReference>
<dbReference type="InterPro" id="IPR013759">
    <property type="entry name" value="Topo_IIA_B_C"/>
</dbReference>
<dbReference type="InterPro" id="IPR013506">
    <property type="entry name" value="Topo_IIA_bsu_dom2"/>
</dbReference>
<dbReference type="InterPro" id="IPR018522">
    <property type="entry name" value="TopoIIA_CS"/>
</dbReference>
<dbReference type="InterPro" id="IPR006171">
    <property type="entry name" value="TOPRIM_dom"/>
</dbReference>
<dbReference type="PANTHER" id="PTHR45866:SF1">
    <property type="entry name" value="DNA GYRASE SUBUNIT B, MITOCHONDRIAL"/>
    <property type="match status" value="1"/>
</dbReference>
<dbReference type="PANTHER" id="PTHR45866">
    <property type="entry name" value="DNA GYRASE/TOPOISOMERASE SUBUNIT B"/>
    <property type="match status" value="1"/>
</dbReference>
<dbReference type="Pfam" id="PF00204">
    <property type="entry name" value="DNA_gyraseB"/>
    <property type="match status" value="1"/>
</dbReference>
<dbReference type="Pfam" id="PF01751">
    <property type="entry name" value="Toprim"/>
    <property type="match status" value="1"/>
</dbReference>
<dbReference type="PRINTS" id="PR01159">
    <property type="entry name" value="DNAGYRASEB"/>
</dbReference>
<dbReference type="PRINTS" id="PR00418">
    <property type="entry name" value="TPI2FAMILY"/>
</dbReference>
<dbReference type="SMART" id="SM00433">
    <property type="entry name" value="TOP2c"/>
    <property type="match status" value="1"/>
</dbReference>
<dbReference type="SUPFAM" id="SSF55874">
    <property type="entry name" value="ATPase domain of HSP90 chaperone/DNA topoisomerase II/histidine kinase"/>
    <property type="match status" value="1"/>
</dbReference>
<dbReference type="SUPFAM" id="SSF54211">
    <property type="entry name" value="Ribosomal protein S5 domain 2-like"/>
    <property type="match status" value="1"/>
</dbReference>
<dbReference type="SUPFAM" id="SSF56719">
    <property type="entry name" value="Type II DNA topoisomerase"/>
    <property type="match status" value="1"/>
</dbReference>
<dbReference type="PROSITE" id="PS00177">
    <property type="entry name" value="TOPOISOMERASE_II"/>
    <property type="match status" value="1"/>
</dbReference>
<dbReference type="PROSITE" id="PS50880">
    <property type="entry name" value="TOPRIM"/>
    <property type="match status" value="1"/>
</dbReference>
<reference key="1">
    <citation type="journal article" date="1999" name="Int. J. Syst. Bacteriol.">
        <title>Phylogenetic structures of the genus Acinetobacter based on gyrB sequences: comparison with the grouping by DNA-DNA hybridization.</title>
        <authorList>
            <person name="Yamamoto S."/>
            <person name="Bouvet P.J.M."/>
            <person name="Harayama S."/>
        </authorList>
    </citation>
    <scope>NUCLEOTIDE SEQUENCE [GENOMIC DNA]</scope>
    <source>
        <strain>ATCC 17945 / CIP 70.22</strain>
        <strain>ATCC 17961 / CIP 70.32 / B55</strain>
        <strain>ATCC 19606 / DSM 30007 / CCUG 19096 / CIP 70.34 / JCM 6841 / LMG 1041 / NBRC 109757 / NCIMB 12457 / NCTC 12156 / 81</strain>
    </source>
</reference>
<reference key="2">
    <citation type="journal article" date="1996" name="Int. J. Syst. Bacteriol.">
        <title>Phylogenetic analysis of Acinetobacter strains based on the nucleotide sequences of gyrB genes and on the amino acid sequences of their products.</title>
        <authorList>
            <person name="Yamamoto S."/>
            <person name="Harayama S."/>
        </authorList>
    </citation>
    <scope>NUCLEOTIDE SEQUENCE [GENOMIC DNA] OF 3-118 AND 289-388</scope>
    <source>
        <strain>ATCC 19606 / DSM 30007 / CCUG 19096 / CIP 70.34 / JCM 6841 / LMG 1041 / NBRC 109757 / NCIMB 12457 / NCTC 12156 / 81</strain>
    </source>
</reference>
<name>GYRB_ACIBA</name>
<feature type="chain" id="PRO_0000145274" description="DNA gyrase subunit B">
    <location>
        <begin position="1" status="less than"/>
        <end position="388" status="greater than"/>
    </location>
</feature>
<feature type="domain" description="Toprim" evidence="2">
    <location>
        <begin position="312"/>
        <end position="388" status="greater than"/>
    </location>
</feature>
<feature type="site" description="Interaction with DNA" evidence="2">
    <location>
        <position position="343"/>
    </location>
</feature>
<feature type="site" description="Interaction with DNA" evidence="2">
    <location>
        <position position="346"/>
    </location>
</feature>
<feature type="sequence conflict" description="In Ref. 2; BAA11153." evidence="3" ref="2">
    <original>Y</original>
    <variation>F</variation>
    <location>
        <position position="110"/>
    </location>
</feature>
<feature type="non-terminal residue">
    <location>
        <position position="1"/>
    </location>
</feature>
<feature type="non-terminal residue">
    <location>
        <position position="388"/>
    </location>
</feature>
<proteinExistence type="inferred from homology"/>
<organism>
    <name type="scientific">Acinetobacter baumannii</name>
    <dbReference type="NCBI Taxonomy" id="470"/>
    <lineage>
        <taxon>Bacteria</taxon>
        <taxon>Pseudomonadati</taxon>
        <taxon>Pseudomonadota</taxon>
        <taxon>Gammaproteobacteria</taxon>
        <taxon>Moraxellales</taxon>
        <taxon>Moraxellaceae</taxon>
        <taxon>Acinetobacter</taxon>
        <taxon>Acinetobacter calcoaceticus/baumannii complex</taxon>
    </lineage>
</organism>
<comment type="function">
    <text evidence="1">A type II topoisomerase that negatively supercoils closed circular double-stranded (ds) DNA in an ATP-dependent manner to modulate DNA topology and maintain chromosomes in an underwound state. Negative supercoiling favors strand separation, and DNA replication, transcription, recombination and repair, all of which involve strand separation. Also able to catalyze the interconversion of other topological isomers of dsDNA rings, including catenanes and knotted rings. Type II topoisomerases break and join 2 DNA strands simultaneously in an ATP-dependent manner.</text>
</comment>
<comment type="catalytic activity">
    <reaction evidence="2">
        <text>ATP-dependent breakage, passage and rejoining of double-stranded DNA.</text>
        <dbReference type="EC" id="5.6.2.2"/>
    </reaction>
</comment>
<comment type="subunit">
    <text evidence="1">Heterotetramer, composed of two GyrA and two GyrB chains. In the heterotetramer, GyrA contains the active site tyrosine that forms a transient covalent intermediate with DNA, while GyrB binds cofactors and catalyzes ATP hydrolysis.</text>
</comment>
<comment type="subcellular location">
    <subcellularLocation>
        <location evidence="1">Cytoplasm</location>
    </subcellularLocation>
</comment>
<comment type="miscellaneous">
    <text>Few gyrases are as efficient as E.coli at forming negative supercoils. Not all organisms have 2 type II topoisomerases; in organisms with a single type II topoisomerase this enzyme also has to decatenate newly replicated chromosomes.</text>
</comment>
<comment type="similarity">
    <text evidence="3">Belongs to the type II topoisomerase GyrB family.</text>
</comment>
<accession>Q43907</accession>
<accession>Q59090</accession>
<accession>Q9ZA10</accession>